<sequence length="57" mass="5872">MKVMSANANVVAAKIMNNAKNHVAAQRGVTATTNAPAVTSLKKPRSHAALGNETNSL</sequence>
<reference key="1">
    <citation type="journal article" date="1994" name="Science">
        <title>Complete nucleotide sequence of Saccharomyces cerevisiae chromosome VIII.</title>
        <authorList>
            <person name="Johnston M."/>
            <person name="Andrews S."/>
            <person name="Brinkman R."/>
            <person name="Cooper J."/>
            <person name="Ding H."/>
            <person name="Dover J."/>
            <person name="Du Z."/>
            <person name="Favello A."/>
            <person name="Fulton L."/>
            <person name="Gattung S."/>
            <person name="Geisel C."/>
            <person name="Kirsten J."/>
            <person name="Kucaba T."/>
            <person name="Hillier L.W."/>
            <person name="Jier M."/>
            <person name="Johnston L."/>
            <person name="Langston Y."/>
            <person name="Latreille P."/>
            <person name="Louis E.J."/>
            <person name="Macri C."/>
            <person name="Mardis E."/>
            <person name="Menezes S."/>
            <person name="Mouser L."/>
            <person name="Nhan M."/>
            <person name="Rifkin L."/>
            <person name="Riles L."/>
            <person name="St Peter H."/>
            <person name="Trevaskis E."/>
            <person name="Vaughan K."/>
            <person name="Vignati D."/>
            <person name="Wilcox L."/>
            <person name="Wohldman P."/>
            <person name="Waterston R."/>
            <person name="Wilson R."/>
            <person name="Vaudin M."/>
        </authorList>
    </citation>
    <scope>NUCLEOTIDE SEQUENCE [LARGE SCALE GENOMIC DNA]</scope>
    <source>
        <strain>ATCC 204508 / S288c</strain>
    </source>
</reference>
<reference key="2">
    <citation type="journal article" date="2014" name="G3 (Bethesda)">
        <title>The reference genome sequence of Saccharomyces cerevisiae: Then and now.</title>
        <authorList>
            <person name="Engel S.R."/>
            <person name="Dietrich F.S."/>
            <person name="Fisk D.G."/>
            <person name="Binkley G."/>
            <person name="Balakrishnan R."/>
            <person name="Costanzo M.C."/>
            <person name="Dwight S.S."/>
            <person name="Hitz B.C."/>
            <person name="Karra K."/>
            <person name="Nash R.S."/>
            <person name="Weng S."/>
            <person name="Wong E.D."/>
            <person name="Lloyd P."/>
            <person name="Skrzypek M.S."/>
            <person name="Miyasato S.R."/>
            <person name="Simison M."/>
            <person name="Cherry J.M."/>
        </authorList>
    </citation>
    <scope>GENOME REANNOTATION</scope>
    <source>
        <strain>ATCC 204508 / S288c</strain>
    </source>
</reference>
<reference key="3">
    <citation type="journal article" date="2018" name="J. Proteome Res.">
        <title>Enrichment-based proteogenomics identifies microproteins, missing proteins, and novel smORFs in Saccharomyces cerevisiae.</title>
        <authorList>
            <person name="He C."/>
            <person name="Jia C."/>
            <person name="Zhang Y."/>
            <person name="Xu P."/>
        </authorList>
    </citation>
    <scope>IDENTIFICATION BY MASS SPECTROMETRY</scope>
</reference>
<proteinExistence type="evidence at protein level"/>
<organism>
    <name type="scientific">Saccharomyces cerevisiae (strain ATCC 204508 / S288c)</name>
    <name type="common">Baker's yeast</name>
    <dbReference type="NCBI Taxonomy" id="559292"/>
    <lineage>
        <taxon>Eukaryota</taxon>
        <taxon>Fungi</taxon>
        <taxon>Dikarya</taxon>
        <taxon>Ascomycota</taxon>
        <taxon>Saccharomycotina</taxon>
        <taxon>Saccharomycetes</taxon>
        <taxon>Saccharomycetales</taxon>
        <taxon>Saccharomycetaceae</taxon>
        <taxon>Saccharomyces</taxon>
    </lineage>
</organism>
<feature type="chain" id="PRO_0000455990" description="Uncharacterized protein YHR054C-B">
    <location>
        <begin position="1"/>
        <end position="57"/>
    </location>
</feature>
<accession>P9WEN9</accession>
<accession>A0A8D9PCQ1</accession>
<dbReference type="EMBL" id="BK006934">
    <property type="protein sequence ID" value="DAD54802.1"/>
    <property type="molecule type" value="Genomic_DNA"/>
</dbReference>
<dbReference type="RefSeq" id="NP_001381961.1">
    <property type="nucleotide sequence ID" value="NM_001395032.1"/>
</dbReference>
<dbReference type="GeneID" id="65052909"/>
<dbReference type="SGD" id="S000303808">
    <property type="gene designation" value="YHR054C-B"/>
</dbReference>
<dbReference type="PRO" id="PR:P9WEN9"/>
<dbReference type="Proteomes" id="UP000002311">
    <property type="component" value="Chromosome VIII"/>
</dbReference>
<dbReference type="Pfam" id="PF23530">
    <property type="entry name" value="YHR052C-B"/>
    <property type="match status" value="1"/>
</dbReference>
<gene>
    <name evidence="2" type="ordered locus">YHR054C-B</name>
</gene>
<protein>
    <recommendedName>
        <fullName evidence="1">Uncharacterized protein YHR054C-B</fullName>
    </recommendedName>
</protein>
<evidence type="ECO:0000305" key="1"/>
<evidence type="ECO:0000312" key="2">
    <source>
        <dbReference type="SGD" id="S000303808"/>
    </source>
</evidence>
<name>YH54B_YEAST</name>
<keyword id="KW-1185">Reference proteome</keyword>